<keyword id="KW-0963">Cytoplasm</keyword>
<keyword id="KW-0324">Glycolysis</keyword>
<keyword id="KW-0456">Lyase</keyword>
<keyword id="KW-0460">Magnesium</keyword>
<keyword id="KW-0479">Metal-binding</keyword>
<keyword id="KW-1185">Reference proteome</keyword>
<keyword id="KW-0964">Secreted</keyword>
<feature type="chain" id="PRO_0000133829" description="Enolase">
    <location>
        <begin position="1"/>
        <end position="424"/>
    </location>
</feature>
<feature type="active site" description="Proton donor" evidence="1">
    <location>
        <position position="204"/>
    </location>
</feature>
<feature type="active site" description="Proton acceptor" evidence="1">
    <location>
        <position position="336"/>
    </location>
</feature>
<feature type="binding site" evidence="1">
    <location>
        <position position="162"/>
    </location>
    <ligand>
        <name>(2R)-2-phosphoglycerate</name>
        <dbReference type="ChEBI" id="CHEBI:58289"/>
    </ligand>
</feature>
<feature type="binding site" evidence="1">
    <location>
        <position position="241"/>
    </location>
    <ligand>
        <name>Mg(2+)</name>
        <dbReference type="ChEBI" id="CHEBI:18420"/>
    </ligand>
</feature>
<feature type="binding site" evidence="1">
    <location>
        <position position="284"/>
    </location>
    <ligand>
        <name>Mg(2+)</name>
        <dbReference type="ChEBI" id="CHEBI:18420"/>
    </ligand>
</feature>
<feature type="binding site" evidence="1">
    <location>
        <position position="311"/>
    </location>
    <ligand>
        <name>Mg(2+)</name>
        <dbReference type="ChEBI" id="CHEBI:18420"/>
    </ligand>
</feature>
<feature type="binding site" evidence="1">
    <location>
        <position position="336"/>
    </location>
    <ligand>
        <name>(2R)-2-phosphoglycerate</name>
        <dbReference type="ChEBI" id="CHEBI:58289"/>
    </ligand>
</feature>
<feature type="binding site" evidence="1">
    <location>
        <position position="365"/>
    </location>
    <ligand>
        <name>(2R)-2-phosphoglycerate</name>
        <dbReference type="ChEBI" id="CHEBI:58289"/>
    </ligand>
</feature>
<feature type="binding site" evidence="1">
    <location>
        <position position="366"/>
    </location>
    <ligand>
        <name>(2R)-2-phosphoglycerate</name>
        <dbReference type="ChEBI" id="CHEBI:58289"/>
    </ligand>
</feature>
<feature type="binding site" evidence="1">
    <location>
        <position position="387"/>
    </location>
    <ligand>
        <name>(2R)-2-phosphoglycerate</name>
        <dbReference type="ChEBI" id="CHEBI:58289"/>
    </ligand>
</feature>
<organism>
    <name type="scientific">Agrobacterium fabrum (strain C58 / ATCC 33970)</name>
    <name type="common">Agrobacterium tumefaciens (strain C58)</name>
    <dbReference type="NCBI Taxonomy" id="176299"/>
    <lineage>
        <taxon>Bacteria</taxon>
        <taxon>Pseudomonadati</taxon>
        <taxon>Pseudomonadota</taxon>
        <taxon>Alphaproteobacteria</taxon>
        <taxon>Hyphomicrobiales</taxon>
        <taxon>Rhizobiaceae</taxon>
        <taxon>Rhizobium/Agrobacterium group</taxon>
        <taxon>Agrobacterium</taxon>
        <taxon>Agrobacterium tumefaciens complex</taxon>
    </lineage>
</organism>
<reference key="1">
    <citation type="journal article" date="2001" name="Science">
        <title>The genome of the natural genetic engineer Agrobacterium tumefaciens C58.</title>
        <authorList>
            <person name="Wood D.W."/>
            <person name="Setubal J.C."/>
            <person name="Kaul R."/>
            <person name="Monks D.E."/>
            <person name="Kitajima J.P."/>
            <person name="Okura V.K."/>
            <person name="Zhou Y."/>
            <person name="Chen L."/>
            <person name="Wood G.E."/>
            <person name="Almeida N.F. Jr."/>
            <person name="Woo L."/>
            <person name="Chen Y."/>
            <person name="Paulsen I.T."/>
            <person name="Eisen J.A."/>
            <person name="Karp P.D."/>
            <person name="Bovee D. Sr."/>
            <person name="Chapman P."/>
            <person name="Clendenning J."/>
            <person name="Deatherage G."/>
            <person name="Gillet W."/>
            <person name="Grant C."/>
            <person name="Kutyavin T."/>
            <person name="Levy R."/>
            <person name="Li M.-J."/>
            <person name="McClelland E."/>
            <person name="Palmieri A."/>
            <person name="Raymond C."/>
            <person name="Rouse G."/>
            <person name="Saenphimmachak C."/>
            <person name="Wu Z."/>
            <person name="Romero P."/>
            <person name="Gordon D."/>
            <person name="Zhang S."/>
            <person name="Yoo H."/>
            <person name="Tao Y."/>
            <person name="Biddle P."/>
            <person name="Jung M."/>
            <person name="Krespan W."/>
            <person name="Perry M."/>
            <person name="Gordon-Kamm B."/>
            <person name="Liao L."/>
            <person name="Kim S."/>
            <person name="Hendrick C."/>
            <person name="Zhao Z.-Y."/>
            <person name="Dolan M."/>
            <person name="Chumley F."/>
            <person name="Tingey S.V."/>
            <person name="Tomb J.-F."/>
            <person name="Gordon M.P."/>
            <person name="Olson M.V."/>
            <person name="Nester E.W."/>
        </authorList>
    </citation>
    <scope>NUCLEOTIDE SEQUENCE [LARGE SCALE GENOMIC DNA]</scope>
    <source>
        <strain>C58 / ATCC 33970</strain>
    </source>
</reference>
<reference key="2">
    <citation type="journal article" date="2001" name="Science">
        <title>Genome sequence of the plant pathogen and biotechnology agent Agrobacterium tumefaciens C58.</title>
        <authorList>
            <person name="Goodner B."/>
            <person name="Hinkle G."/>
            <person name="Gattung S."/>
            <person name="Miller N."/>
            <person name="Blanchard M."/>
            <person name="Qurollo B."/>
            <person name="Goldman B.S."/>
            <person name="Cao Y."/>
            <person name="Askenazi M."/>
            <person name="Halling C."/>
            <person name="Mullin L."/>
            <person name="Houmiel K."/>
            <person name="Gordon J."/>
            <person name="Vaudin M."/>
            <person name="Iartchouk O."/>
            <person name="Epp A."/>
            <person name="Liu F."/>
            <person name="Wollam C."/>
            <person name="Allinger M."/>
            <person name="Doughty D."/>
            <person name="Scott C."/>
            <person name="Lappas C."/>
            <person name="Markelz B."/>
            <person name="Flanagan C."/>
            <person name="Crowell C."/>
            <person name="Gurson J."/>
            <person name="Lomo C."/>
            <person name="Sear C."/>
            <person name="Strub G."/>
            <person name="Cielo C."/>
            <person name="Slater S."/>
        </authorList>
    </citation>
    <scope>NUCLEOTIDE SEQUENCE [LARGE SCALE GENOMIC DNA]</scope>
    <source>
        <strain>C58 / ATCC 33970</strain>
    </source>
</reference>
<evidence type="ECO:0000255" key="1">
    <source>
        <dbReference type="HAMAP-Rule" id="MF_00318"/>
    </source>
</evidence>
<sequence length="424" mass="45142">MTAITDIIAREILDSRGNPTVEVDVYLEDGSMGRAAVPSGASTGAHEAVELRDGGKRYLGKGVEKAVEAVNTEIFDAIGGFDAENQIQIDQMMIALDGTPNKSRLGANAILGVSLAIAKAAAEASGLPLYRYVGGPNAHLLPVPMMNIINGGAHADNPIDFQEFMILPVGAENIREAVRMGSEVFHTLKKELSAQGHNTNVGDEGGFAPGLESAPAALDFIMKSIEKAGYRPGEDMYVGLDCASTEFFKDGKYVLEGEGRTLEPGAMAEYLAELVNKYPIISVEDGMAEDDWEGWKTLTDLVGNKCQLVGDDLFVTNSARLRDGIKMGVANSILVKVNQIGSLSETLDAVETAHKAGYTAVMSHRSGETEDSTIADLAVATNCGQIKTGSLARSDRLAKYNQLIRIEEMLGPQAAYAGRSILRG</sequence>
<protein>
    <recommendedName>
        <fullName evidence="1">Enolase</fullName>
        <ecNumber evidence="1">4.2.1.11</ecNumber>
    </recommendedName>
    <alternativeName>
        <fullName evidence="1">2-phospho-D-glycerate hydro-lyase</fullName>
    </alternativeName>
    <alternativeName>
        <fullName evidence="1">2-phosphoglycerate dehydratase</fullName>
    </alternativeName>
</protein>
<name>ENO_AGRFC</name>
<proteinExistence type="inferred from homology"/>
<comment type="function">
    <text evidence="1">Catalyzes the reversible conversion of 2-phosphoglycerate (2-PG) into phosphoenolpyruvate (PEP). It is essential for the degradation of carbohydrates via glycolysis.</text>
</comment>
<comment type="catalytic activity">
    <reaction evidence="1">
        <text>(2R)-2-phosphoglycerate = phosphoenolpyruvate + H2O</text>
        <dbReference type="Rhea" id="RHEA:10164"/>
        <dbReference type="ChEBI" id="CHEBI:15377"/>
        <dbReference type="ChEBI" id="CHEBI:58289"/>
        <dbReference type="ChEBI" id="CHEBI:58702"/>
        <dbReference type="EC" id="4.2.1.11"/>
    </reaction>
</comment>
<comment type="cofactor">
    <cofactor evidence="1">
        <name>Mg(2+)</name>
        <dbReference type="ChEBI" id="CHEBI:18420"/>
    </cofactor>
    <text evidence="1">Binds a second Mg(2+) ion via substrate during catalysis.</text>
</comment>
<comment type="pathway">
    <text evidence="1">Carbohydrate degradation; glycolysis; pyruvate from D-glyceraldehyde 3-phosphate: step 4/5.</text>
</comment>
<comment type="subcellular location">
    <subcellularLocation>
        <location evidence="1">Cytoplasm</location>
    </subcellularLocation>
    <subcellularLocation>
        <location evidence="1">Secreted</location>
    </subcellularLocation>
    <subcellularLocation>
        <location evidence="1">Cell surface</location>
    </subcellularLocation>
    <text evidence="1">Fractions of enolase are present in both the cytoplasm and on the cell surface.</text>
</comment>
<comment type="similarity">
    <text evidence="1">Belongs to the enolase family.</text>
</comment>
<gene>
    <name evidence="1" type="primary">eno</name>
    <name type="ordered locus">Atu1426</name>
    <name type="ORF">AGR_C_2631</name>
</gene>
<accession>Q8UFH1</accession>
<dbReference type="EC" id="4.2.1.11" evidence="1"/>
<dbReference type="EMBL" id="AE007869">
    <property type="protein sequence ID" value="AAK87218.1"/>
    <property type="molecule type" value="Genomic_DNA"/>
</dbReference>
<dbReference type="PIR" id="A97533">
    <property type="entry name" value="A97533"/>
</dbReference>
<dbReference type="PIR" id="AB2752">
    <property type="entry name" value="AB2752"/>
</dbReference>
<dbReference type="RefSeq" id="NP_354433.1">
    <property type="nucleotide sequence ID" value="NC_003062.2"/>
</dbReference>
<dbReference type="RefSeq" id="WP_006312487.1">
    <property type="nucleotide sequence ID" value="NC_003062.2"/>
</dbReference>
<dbReference type="SMR" id="Q8UFH1"/>
<dbReference type="STRING" id="176299.Atu1426"/>
<dbReference type="EnsemblBacteria" id="AAK87218">
    <property type="protein sequence ID" value="AAK87218"/>
    <property type="gene ID" value="Atu1426"/>
</dbReference>
<dbReference type="GeneID" id="1133464"/>
<dbReference type="KEGG" id="atu:Atu1426"/>
<dbReference type="PATRIC" id="fig|176299.10.peg.1448"/>
<dbReference type="eggNOG" id="COG0148">
    <property type="taxonomic scope" value="Bacteria"/>
</dbReference>
<dbReference type="HOGENOM" id="CLU_031223_2_1_5"/>
<dbReference type="OrthoDB" id="9804716at2"/>
<dbReference type="PhylomeDB" id="Q8UFH1"/>
<dbReference type="UniPathway" id="UPA00109">
    <property type="reaction ID" value="UER00187"/>
</dbReference>
<dbReference type="Proteomes" id="UP000000813">
    <property type="component" value="Chromosome circular"/>
</dbReference>
<dbReference type="GO" id="GO:0009986">
    <property type="term" value="C:cell surface"/>
    <property type="evidence" value="ECO:0007669"/>
    <property type="project" value="UniProtKB-SubCell"/>
</dbReference>
<dbReference type="GO" id="GO:0005576">
    <property type="term" value="C:extracellular region"/>
    <property type="evidence" value="ECO:0007669"/>
    <property type="project" value="UniProtKB-SubCell"/>
</dbReference>
<dbReference type="GO" id="GO:0000015">
    <property type="term" value="C:phosphopyruvate hydratase complex"/>
    <property type="evidence" value="ECO:0007669"/>
    <property type="project" value="InterPro"/>
</dbReference>
<dbReference type="GO" id="GO:0000287">
    <property type="term" value="F:magnesium ion binding"/>
    <property type="evidence" value="ECO:0007669"/>
    <property type="project" value="UniProtKB-UniRule"/>
</dbReference>
<dbReference type="GO" id="GO:0004634">
    <property type="term" value="F:phosphopyruvate hydratase activity"/>
    <property type="evidence" value="ECO:0007669"/>
    <property type="project" value="UniProtKB-UniRule"/>
</dbReference>
<dbReference type="GO" id="GO:0006096">
    <property type="term" value="P:glycolytic process"/>
    <property type="evidence" value="ECO:0007669"/>
    <property type="project" value="UniProtKB-UniRule"/>
</dbReference>
<dbReference type="CDD" id="cd03313">
    <property type="entry name" value="enolase"/>
    <property type="match status" value="1"/>
</dbReference>
<dbReference type="FunFam" id="3.20.20.120:FF:000001">
    <property type="entry name" value="Enolase"/>
    <property type="match status" value="1"/>
</dbReference>
<dbReference type="FunFam" id="3.30.390.10:FF:000001">
    <property type="entry name" value="Enolase"/>
    <property type="match status" value="1"/>
</dbReference>
<dbReference type="Gene3D" id="3.20.20.120">
    <property type="entry name" value="Enolase-like C-terminal domain"/>
    <property type="match status" value="1"/>
</dbReference>
<dbReference type="Gene3D" id="3.30.390.10">
    <property type="entry name" value="Enolase-like, N-terminal domain"/>
    <property type="match status" value="1"/>
</dbReference>
<dbReference type="HAMAP" id="MF_00318">
    <property type="entry name" value="Enolase"/>
    <property type="match status" value="1"/>
</dbReference>
<dbReference type="InterPro" id="IPR000941">
    <property type="entry name" value="Enolase"/>
</dbReference>
<dbReference type="InterPro" id="IPR036849">
    <property type="entry name" value="Enolase-like_C_sf"/>
</dbReference>
<dbReference type="InterPro" id="IPR029017">
    <property type="entry name" value="Enolase-like_N"/>
</dbReference>
<dbReference type="InterPro" id="IPR020810">
    <property type="entry name" value="Enolase_C"/>
</dbReference>
<dbReference type="InterPro" id="IPR020809">
    <property type="entry name" value="Enolase_CS"/>
</dbReference>
<dbReference type="InterPro" id="IPR020811">
    <property type="entry name" value="Enolase_N"/>
</dbReference>
<dbReference type="NCBIfam" id="TIGR01060">
    <property type="entry name" value="eno"/>
    <property type="match status" value="1"/>
</dbReference>
<dbReference type="PANTHER" id="PTHR11902">
    <property type="entry name" value="ENOLASE"/>
    <property type="match status" value="1"/>
</dbReference>
<dbReference type="PANTHER" id="PTHR11902:SF1">
    <property type="entry name" value="ENOLASE"/>
    <property type="match status" value="1"/>
</dbReference>
<dbReference type="Pfam" id="PF00113">
    <property type="entry name" value="Enolase_C"/>
    <property type="match status" value="1"/>
</dbReference>
<dbReference type="Pfam" id="PF03952">
    <property type="entry name" value="Enolase_N"/>
    <property type="match status" value="1"/>
</dbReference>
<dbReference type="PIRSF" id="PIRSF001400">
    <property type="entry name" value="Enolase"/>
    <property type="match status" value="1"/>
</dbReference>
<dbReference type="PRINTS" id="PR00148">
    <property type="entry name" value="ENOLASE"/>
</dbReference>
<dbReference type="SFLD" id="SFLDF00002">
    <property type="entry name" value="enolase"/>
    <property type="match status" value="1"/>
</dbReference>
<dbReference type="SFLD" id="SFLDG00178">
    <property type="entry name" value="enolase"/>
    <property type="match status" value="1"/>
</dbReference>
<dbReference type="SMART" id="SM01192">
    <property type="entry name" value="Enolase_C"/>
    <property type="match status" value="1"/>
</dbReference>
<dbReference type="SMART" id="SM01193">
    <property type="entry name" value="Enolase_N"/>
    <property type="match status" value="1"/>
</dbReference>
<dbReference type="SUPFAM" id="SSF51604">
    <property type="entry name" value="Enolase C-terminal domain-like"/>
    <property type="match status" value="1"/>
</dbReference>
<dbReference type="SUPFAM" id="SSF54826">
    <property type="entry name" value="Enolase N-terminal domain-like"/>
    <property type="match status" value="1"/>
</dbReference>
<dbReference type="PROSITE" id="PS00164">
    <property type="entry name" value="ENOLASE"/>
    <property type="match status" value="1"/>
</dbReference>